<feature type="chain" id="PRO_1000073574" description="Phosphoglucosamine mutase">
    <location>
        <begin position="1"/>
        <end position="448"/>
    </location>
</feature>
<feature type="active site" description="Phosphoserine intermediate" evidence="1">
    <location>
        <position position="102"/>
    </location>
</feature>
<feature type="binding site" description="via phosphate group" evidence="1">
    <location>
        <position position="102"/>
    </location>
    <ligand>
        <name>Mg(2+)</name>
        <dbReference type="ChEBI" id="CHEBI:18420"/>
    </ligand>
</feature>
<feature type="binding site" evidence="1">
    <location>
        <position position="243"/>
    </location>
    <ligand>
        <name>Mg(2+)</name>
        <dbReference type="ChEBI" id="CHEBI:18420"/>
    </ligand>
</feature>
<feature type="binding site" evidence="1">
    <location>
        <position position="245"/>
    </location>
    <ligand>
        <name>Mg(2+)</name>
        <dbReference type="ChEBI" id="CHEBI:18420"/>
    </ligand>
</feature>
<feature type="binding site" evidence="1">
    <location>
        <position position="247"/>
    </location>
    <ligand>
        <name>Mg(2+)</name>
        <dbReference type="ChEBI" id="CHEBI:18420"/>
    </ligand>
</feature>
<feature type="modified residue" description="Phosphoserine" evidence="1">
    <location>
        <position position="102"/>
    </location>
</feature>
<sequence>MPRKYFGTDGIRGTANTGHMTAETALRVGMAAGRVFRRGEHRHRVVIGKDTRLSGYMLEPALTAGFTSMGMDVFLFGPLPTPAVAMLTRSLRADLGVMISASHNSFEDNGIKLFGPDGFKLSDEVELAIEHHMDNGLADNLAGSRGLGRAKRIEDAQARYIEHVKHTFPKQQTLEGLRIVIDCANGAAYKVAPEVLWELGAEVVTVGTEPNGFNINEDCGSTAPERMCAAVLERRADIGIALDGDADRVIIADERGKVIDGDQIMGLVARHWKEMGTLSAPGIVATVMSNLGLERYLGSLGLDLVRTQVGDRYVVEHMREHGYNVGGEQSGHIVLKDFSTTGDGLIAALQVLAVLKAGDKPVSEICHLFDPLPQLLKNIRFKRGEPLKDKDVQEAIREGESRLGKTGRLVIRKSGTEPLIRVMGEGDDEKLVTSVVNDIAAVIEHNAA</sequence>
<dbReference type="EC" id="5.4.2.10" evidence="1"/>
<dbReference type="EMBL" id="CP000774">
    <property type="protein sequence ID" value="ABS63745.1"/>
    <property type="molecule type" value="Genomic_DNA"/>
</dbReference>
<dbReference type="RefSeq" id="WP_012111049.1">
    <property type="nucleotide sequence ID" value="NC_009719.1"/>
</dbReference>
<dbReference type="SMR" id="A7HV12"/>
<dbReference type="STRING" id="402881.Plav_2131"/>
<dbReference type="KEGG" id="pla:Plav_2131"/>
<dbReference type="eggNOG" id="COG1109">
    <property type="taxonomic scope" value="Bacteria"/>
</dbReference>
<dbReference type="HOGENOM" id="CLU_016950_7_0_5"/>
<dbReference type="OrthoDB" id="9803322at2"/>
<dbReference type="Proteomes" id="UP000006377">
    <property type="component" value="Chromosome"/>
</dbReference>
<dbReference type="GO" id="GO:0005829">
    <property type="term" value="C:cytosol"/>
    <property type="evidence" value="ECO:0007669"/>
    <property type="project" value="TreeGrafter"/>
</dbReference>
<dbReference type="GO" id="GO:0000287">
    <property type="term" value="F:magnesium ion binding"/>
    <property type="evidence" value="ECO:0007669"/>
    <property type="project" value="UniProtKB-UniRule"/>
</dbReference>
<dbReference type="GO" id="GO:0008966">
    <property type="term" value="F:phosphoglucosamine mutase activity"/>
    <property type="evidence" value="ECO:0007669"/>
    <property type="project" value="UniProtKB-UniRule"/>
</dbReference>
<dbReference type="GO" id="GO:0004615">
    <property type="term" value="F:phosphomannomutase activity"/>
    <property type="evidence" value="ECO:0007669"/>
    <property type="project" value="TreeGrafter"/>
</dbReference>
<dbReference type="GO" id="GO:0005975">
    <property type="term" value="P:carbohydrate metabolic process"/>
    <property type="evidence" value="ECO:0007669"/>
    <property type="project" value="InterPro"/>
</dbReference>
<dbReference type="GO" id="GO:0009252">
    <property type="term" value="P:peptidoglycan biosynthetic process"/>
    <property type="evidence" value="ECO:0007669"/>
    <property type="project" value="TreeGrafter"/>
</dbReference>
<dbReference type="GO" id="GO:0006048">
    <property type="term" value="P:UDP-N-acetylglucosamine biosynthetic process"/>
    <property type="evidence" value="ECO:0007669"/>
    <property type="project" value="TreeGrafter"/>
</dbReference>
<dbReference type="CDD" id="cd05802">
    <property type="entry name" value="GlmM"/>
    <property type="match status" value="1"/>
</dbReference>
<dbReference type="FunFam" id="3.30.310.50:FF:000001">
    <property type="entry name" value="Phosphoglucosamine mutase"/>
    <property type="match status" value="1"/>
</dbReference>
<dbReference type="FunFam" id="3.40.120.10:FF:000001">
    <property type="entry name" value="Phosphoglucosamine mutase"/>
    <property type="match status" value="1"/>
</dbReference>
<dbReference type="FunFam" id="3.40.120.10:FF:000003">
    <property type="entry name" value="Phosphoglucosamine mutase"/>
    <property type="match status" value="1"/>
</dbReference>
<dbReference type="Gene3D" id="3.40.120.10">
    <property type="entry name" value="Alpha-D-Glucose-1,6-Bisphosphate, subunit A, domain 3"/>
    <property type="match status" value="3"/>
</dbReference>
<dbReference type="Gene3D" id="3.30.310.50">
    <property type="entry name" value="Alpha-D-phosphohexomutase, C-terminal domain"/>
    <property type="match status" value="1"/>
</dbReference>
<dbReference type="HAMAP" id="MF_01554_B">
    <property type="entry name" value="GlmM_B"/>
    <property type="match status" value="1"/>
</dbReference>
<dbReference type="InterPro" id="IPR005844">
    <property type="entry name" value="A-D-PHexomutase_a/b/a-I"/>
</dbReference>
<dbReference type="InterPro" id="IPR016055">
    <property type="entry name" value="A-D-PHexomutase_a/b/a-I/II/III"/>
</dbReference>
<dbReference type="InterPro" id="IPR005845">
    <property type="entry name" value="A-D-PHexomutase_a/b/a-II"/>
</dbReference>
<dbReference type="InterPro" id="IPR005846">
    <property type="entry name" value="A-D-PHexomutase_a/b/a-III"/>
</dbReference>
<dbReference type="InterPro" id="IPR005843">
    <property type="entry name" value="A-D-PHexomutase_C"/>
</dbReference>
<dbReference type="InterPro" id="IPR036900">
    <property type="entry name" value="A-D-PHexomutase_C_sf"/>
</dbReference>
<dbReference type="InterPro" id="IPR005841">
    <property type="entry name" value="Alpha-D-phosphohexomutase_SF"/>
</dbReference>
<dbReference type="InterPro" id="IPR006352">
    <property type="entry name" value="GlmM_bact"/>
</dbReference>
<dbReference type="InterPro" id="IPR050060">
    <property type="entry name" value="Phosphoglucosamine_mutase"/>
</dbReference>
<dbReference type="NCBIfam" id="TIGR01455">
    <property type="entry name" value="glmM"/>
    <property type="match status" value="1"/>
</dbReference>
<dbReference type="NCBIfam" id="NF008139">
    <property type="entry name" value="PRK10887.1"/>
    <property type="match status" value="1"/>
</dbReference>
<dbReference type="PANTHER" id="PTHR42946:SF1">
    <property type="entry name" value="PHOSPHOGLUCOMUTASE (ALPHA-D-GLUCOSE-1,6-BISPHOSPHATE-DEPENDENT)"/>
    <property type="match status" value="1"/>
</dbReference>
<dbReference type="PANTHER" id="PTHR42946">
    <property type="entry name" value="PHOSPHOHEXOSE MUTASE"/>
    <property type="match status" value="1"/>
</dbReference>
<dbReference type="Pfam" id="PF02878">
    <property type="entry name" value="PGM_PMM_I"/>
    <property type="match status" value="1"/>
</dbReference>
<dbReference type="Pfam" id="PF02879">
    <property type="entry name" value="PGM_PMM_II"/>
    <property type="match status" value="1"/>
</dbReference>
<dbReference type="Pfam" id="PF02880">
    <property type="entry name" value="PGM_PMM_III"/>
    <property type="match status" value="1"/>
</dbReference>
<dbReference type="Pfam" id="PF00408">
    <property type="entry name" value="PGM_PMM_IV"/>
    <property type="match status" value="1"/>
</dbReference>
<dbReference type="PRINTS" id="PR00509">
    <property type="entry name" value="PGMPMM"/>
</dbReference>
<dbReference type="SUPFAM" id="SSF55957">
    <property type="entry name" value="Phosphoglucomutase, C-terminal domain"/>
    <property type="match status" value="1"/>
</dbReference>
<dbReference type="SUPFAM" id="SSF53738">
    <property type="entry name" value="Phosphoglucomutase, first 3 domains"/>
    <property type="match status" value="3"/>
</dbReference>
<comment type="function">
    <text evidence="1">Catalyzes the conversion of glucosamine-6-phosphate to glucosamine-1-phosphate.</text>
</comment>
<comment type="catalytic activity">
    <reaction evidence="1">
        <text>alpha-D-glucosamine 1-phosphate = D-glucosamine 6-phosphate</text>
        <dbReference type="Rhea" id="RHEA:23424"/>
        <dbReference type="ChEBI" id="CHEBI:58516"/>
        <dbReference type="ChEBI" id="CHEBI:58725"/>
        <dbReference type="EC" id="5.4.2.10"/>
    </reaction>
</comment>
<comment type="cofactor">
    <cofactor evidence="1">
        <name>Mg(2+)</name>
        <dbReference type="ChEBI" id="CHEBI:18420"/>
    </cofactor>
    <text evidence="1">Binds 1 Mg(2+) ion per subunit.</text>
</comment>
<comment type="PTM">
    <text evidence="1">Activated by phosphorylation.</text>
</comment>
<comment type="similarity">
    <text evidence="1">Belongs to the phosphohexose mutase family.</text>
</comment>
<organism>
    <name type="scientific">Parvibaculum lavamentivorans (strain DS-1 / DSM 13023 / NCIMB 13966)</name>
    <dbReference type="NCBI Taxonomy" id="402881"/>
    <lineage>
        <taxon>Bacteria</taxon>
        <taxon>Pseudomonadati</taxon>
        <taxon>Pseudomonadota</taxon>
        <taxon>Alphaproteobacteria</taxon>
        <taxon>Hyphomicrobiales</taxon>
        <taxon>Parvibaculaceae</taxon>
        <taxon>Parvibaculum</taxon>
    </lineage>
</organism>
<evidence type="ECO:0000255" key="1">
    <source>
        <dbReference type="HAMAP-Rule" id="MF_01554"/>
    </source>
</evidence>
<proteinExistence type="inferred from homology"/>
<keyword id="KW-0413">Isomerase</keyword>
<keyword id="KW-0460">Magnesium</keyword>
<keyword id="KW-0479">Metal-binding</keyword>
<keyword id="KW-0597">Phosphoprotein</keyword>
<keyword id="KW-1185">Reference proteome</keyword>
<accession>A7HV12</accession>
<reference key="1">
    <citation type="journal article" date="2011" name="Stand. Genomic Sci.">
        <title>Complete genome sequence of Parvibaculum lavamentivorans type strain (DS-1(T)).</title>
        <authorList>
            <person name="Schleheck D."/>
            <person name="Weiss M."/>
            <person name="Pitluck S."/>
            <person name="Bruce D."/>
            <person name="Land M.L."/>
            <person name="Han S."/>
            <person name="Saunders E."/>
            <person name="Tapia R."/>
            <person name="Detter C."/>
            <person name="Brettin T."/>
            <person name="Han J."/>
            <person name="Woyke T."/>
            <person name="Goodwin L."/>
            <person name="Pennacchio L."/>
            <person name="Nolan M."/>
            <person name="Cook A.M."/>
            <person name="Kjelleberg S."/>
            <person name="Thomas T."/>
        </authorList>
    </citation>
    <scope>NUCLEOTIDE SEQUENCE [LARGE SCALE GENOMIC DNA]</scope>
    <source>
        <strain>DS-1 / DSM 13023 / NCIMB 13966</strain>
    </source>
</reference>
<name>GLMM_PARL1</name>
<protein>
    <recommendedName>
        <fullName evidence="1">Phosphoglucosamine mutase</fullName>
        <ecNumber evidence="1">5.4.2.10</ecNumber>
    </recommendedName>
</protein>
<gene>
    <name evidence="1" type="primary">glmM</name>
    <name type="ordered locus">Plav_2131</name>
</gene>